<gene>
    <name evidence="1" type="primary">atpD</name>
    <name type="ordered locus">BLi03926</name>
    <name type="ordered locus">BL04000</name>
</gene>
<keyword id="KW-0066">ATP synthesis</keyword>
<keyword id="KW-0067">ATP-binding</keyword>
<keyword id="KW-1003">Cell membrane</keyword>
<keyword id="KW-0139">CF(1)</keyword>
<keyword id="KW-0375">Hydrogen ion transport</keyword>
<keyword id="KW-0406">Ion transport</keyword>
<keyword id="KW-0472">Membrane</keyword>
<keyword id="KW-0547">Nucleotide-binding</keyword>
<keyword id="KW-1185">Reference proteome</keyword>
<keyword id="KW-1278">Translocase</keyword>
<keyword id="KW-0813">Transport</keyword>
<proteinExistence type="inferred from homology"/>
<feature type="chain" id="PRO_0000254210" description="ATP synthase subunit beta">
    <location>
        <begin position="1"/>
        <end position="473"/>
    </location>
</feature>
<feature type="binding site" evidence="1">
    <location>
        <begin position="158"/>
        <end position="165"/>
    </location>
    <ligand>
        <name>ATP</name>
        <dbReference type="ChEBI" id="CHEBI:30616"/>
    </ligand>
</feature>
<organism>
    <name type="scientific">Bacillus licheniformis (strain ATCC 14580 / DSM 13 / JCM 2505 / CCUG 7422 / NBRC 12200 / NCIMB 9375 / NCTC 10341 / NRRL NRS-1264 / Gibson 46)</name>
    <dbReference type="NCBI Taxonomy" id="279010"/>
    <lineage>
        <taxon>Bacteria</taxon>
        <taxon>Bacillati</taxon>
        <taxon>Bacillota</taxon>
        <taxon>Bacilli</taxon>
        <taxon>Bacillales</taxon>
        <taxon>Bacillaceae</taxon>
        <taxon>Bacillus</taxon>
    </lineage>
</organism>
<dbReference type="EC" id="7.1.2.2" evidence="1"/>
<dbReference type="EMBL" id="AE017333">
    <property type="protein sequence ID" value="AAU42740.1"/>
    <property type="molecule type" value="Genomic_DNA"/>
</dbReference>
<dbReference type="EMBL" id="CP000002">
    <property type="protein sequence ID" value="AAU25366.1"/>
    <property type="molecule type" value="Genomic_DNA"/>
</dbReference>
<dbReference type="RefSeq" id="WP_003186006.1">
    <property type="nucleotide sequence ID" value="NC_006322.1"/>
</dbReference>
<dbReference type="SMR" id="Q65DX4"/>
<dbReference type="STRING" id="279010.BL04000"/>
<dbReference type="GeneID" id="92859501"/>
<dbReference type="KEGG" id="bld:BLi03926"/>
<dbReference type="KEGG" id="bli:BL04000"/>
<dbReference type="eggNOG" id="COG0055">
    <property type="taxonomic scope" value="Bacteria"/>
</dbReference>
<dbReference type="HOGENOM" id="CLU_022398_0_2_9"/>
<dbReference type="Proteomes" id="UP000000606">
    <property type="component" value="Chromosome"/>
</dbReference>
<dbReference type="GO" id="GO:0005886">
    <property type="term" value="C:plasma membrane"/>
    <property type="evidence" value="ECO:0007669"/>
    <property type="project" value="UniProtKB-SubCell"/>
</dbReference>
<dbReference type="GO" id="GO:0045259">
    <property type="term" value="C:proton-transporting ATP synthase complex"/>
    <property type="evidence" value="ECO:0007669"/>
    <property type="project" value="UniProtKB-KW"/>
</dbReference>
<dbReference type="GO" id="GO:0005524">
    <property type="term" value="F:ATP binding"/>
    <property type="evidence" value="ECO:0007669"/>
    <property type="project" value="UniProtKB-UniRule"/>
</dbReference>
<dbReference type="GO" id="GO:0016887">
    <property type="term" value="F:ATP hydrolysis activity"/>
    <property type="evidence" value="ECO:0007669"/>
    <property type="project" value="InterPro"/>
</dbReference>
<dbReference type="GO" id="GO:0046933">
    <property type="term" value="F:proton-transporting ATP synthase activity, rotational mechanism"/>
    <property type="evidence" value="ECO:0007669"/>
    <property type="project" value="UniProtKB-UniRule"/>
</dbReference>
<dbReference type="CDD" id="cd18110">
    <property type="entry name" value="ATP-synt_F1_beta_C"/>
    <property type="match status" value="1"/>
</dbReference>
<dbReference type="CDD" id="cd18115">
    <property type="entry name" value="ATP-synt_F1_beta_N"/>
    <property type="match status" value="1"/>
</dbReference>
<dbReference type="CDD" id="cd01133">
    <property type="entry name" value="F1-ATPase_beta_CD"/>
    <property type="match status" value="1"/>
</dbReference>
<dbReference type="FunFam" id="1.10.1140.10:FF:000001">
    <property type="entry name" value="ATP synthase subunit beta"/>
    <property type="match status" value="1"/>
</dbReference>
<dbReference type="FunFam" id="2.40.10.170:FF:000005">
    <property type="entry name" value="ATP synthase subunit beta"/>
    <property type="match status" value="1"/>
</dbReference>
<dbReference type="FunFam" id="3.40.50.300:FF:000004">
    <property type="entry name" value="ATP synthase subunit beta"/>
    <property type="match status" value="1"/>
</dbReference>
<dbReference type="Gene3D" id="2.40.10.170">
    <property type="match status" value="1"/>
</dbReference>
<dbReference type="Gene3D" id="1.10.1140.10">
    <property type="entry name" value="Bovine Mitochondrial F1-atpase, Atp Synthase Beta Chain, Chain D, domain 3"/>
    <property type="match status" value="1"/>
</dbReference>
<dbReference type="Gene3D" id="3.40.50.300">
    <property type="entry name" value="P-loop containing nucleotide triphosphate hydrolases"/>
    <property type="match status" value="1"/>
</dbReference>
<dbReference type="HAMAP" id="MF_01347">
    <property type="entry name" value="ATP_synth_beta_bact"/>
    <property type="match status" value="1"/>
</dbReference>
<dbReference type="InterPro" id="IPR003593">
    <property type="entry name" value="AAA+_ATPase"/>
</dbReference>
<dbReference type="InterPro" id="IPR055190">
    <property type="entry name" value="ATP-synt_VA_C"/>
</dbReference>
<dbReference type="InterPro" id="IPR005722">
    <property type="entry name" value="ATP_synth_F1_bsu"/>
</dbReference>
<dbReference type="InterPro" id="IPR020003">
    <property type="entry name" value="ATPase_a/bsu_AS"/>
</dbReference>
<dbReference type="InterPro" id="IPR050053">
    <property type="entry name" value="ATPase_alpha/beta_chains"/>
</dbReference>
<dbReference type="InterPro" id="IPR004100">
    <property type="entry name" value="ATPase_F1/V1/A1_a/bsu_N"/>
</dbReference>
<dbReference type="InterPro" id="IPR036121">
    <property type="entry name" value="ATPase_F1/V1/A1_a/bsu_N_sf"/>
</dbReference>
<dbReference type="InterPro" id="IPR000194">
    <property type="entry name" value="ATPase_F1/V1/A1_a/bsu_nucl-bd"/>
</dbReference>
<dbReference type="InterPro" id="IPR024034">
    <property type="entry name" value="ATPase_F1/V1_b/a_C"/>
</dbReference>
<dbReference type="InterPro" id="IPR027417">
    <property type="entry name" value="P-loop_NTPase"/>
</dbReference>
<dbReference type="NCBIfam" id="TIGR01039">
    <property type="entry name" value="atpD"/>
    <property type="match status" value="1"/>
</dbReference>
<dbReference type="PANTHER" id="PTHR15184">
    <property type="entry name" value="ATP SYNTHASE"/>
    <property type="match status" value="1"/>
</dbReference>
<dbReference type="PANTHER" id="PTHR15184:SF71">
    <property type="entry name" value="ATP SYNTHASE SUBUNIT BETA, MITOCHONDRIAL"/>
    <property type="match status" value="1"/>
</dbReference>
<dbReference type="Pfam" id="PF00006">
    <property type="entry name" value="ATP-synt_ab"/>
    <property type="match status" value="1"/>
</dbReference>
<dbReference type="Pfam" id="PF02874">
    <property type="entry name" value="ATP-synt_ab_N"/>
    <property type="match status" value="1"/>
</dbReference>
<dbReference type="Pfam" id="PF22919">
    <property type="entry name" value="ATP-synt_VA_C"/>
    <property type="match status" value="1"/>
</dbReference>
<dbReference type="SMART" id="SM00382">
    <property type="entry name" value="AAA"/>
    <property type="match status" value="1"/>
</dbReference>
<dbReference type="SUPFAM" id="SSF47917">
    <property type="entry name" value="C-terminal domain of alpha and beta subunits of F1 ATP synthase"/>
    <property type="match status" value="1"/>
</dbReference>
<dbReference type="SUPFAM" id="SSF50615">
    <property type="entry name" value="N-terminal domain of alpha and beta subunits of F1 ATP synthase"/>
    <property type="match status" value="1"/>
</dbReference>
<dbReference type="SUPFAM" id="SSF52540">
    <property type="entry name" value="P-loop containing nucleoside triphosphate hydrolases"/>
    <property type="match status" value="1"/>
</dbReference>
<dbReference type="PROSITE" id="PS00152">
    <property type="entry name" value="ATPASE_ALPHA_BETA"/>
    <property type="match status" value="1"/>
</dbReference>
<reference key="1">
    <citation type="journal article" date="2004" name="J. Mol. Microbiol. Biotechnol.">
        <title>The complete genome sequence of Bacillus licheniformis DSM13, an organism with great industrial potential.</title>
        <authorList>
            <person name="Veith B."/>
            <person name="Herzberg C."/>
            <person name="Steckel S."/>
            <person name="Feesche J."/>
            <person name="Maurer K.H."/>
            <person name="Ehrenreich P."/>
            <person name="Baeumer S."/>
            <person name="Henne A."/>
            <person name="Liesegang H."/>
            <person name="Merkl R."/>
            <person name="Ehrenreich A."/>
            <person name="Gottschalk G."/>
        </authorList>
    </citation>
    <scope>NUCLEOTIDE SEQUENCE [LARGE SCALE GENOMIC DNA]</scope>
    <source>
        <strain>ATCC 14580 / DSM 13 / JCM 2505 / CCUG 7422 / NBRC 12200 / NCIMB 9375 / NCTC 10341 / NRRL NRS-1264 / Gibson 46</strain>
    </source>
</reference>
<reference key="2">
    <citation type="journal article" date="2004" name="Genome Biol.">
        <title>Complete genome sequence of the industrial bacterium Bacillus licheniformis and comparisons with closely related Bacillus species.</title>
        <authorList>
            <person name="Rey M.W."/>
            <person name="Ramaiya P."/>
            <person name="Nelson B.A."/>
            <person name="Brody-Karpin S.D."/>
            <person name="Zaretsky E.J."/>
            <person name="Tang M."/>
            <person name="Lopez de Leon A."/>
            <person name="Xiang H."/>
            <person name="Gusti V."/>
            <person name="Clausen I.G."/>
            <person name="Olsen P.B."/>
            <person name="Rasmussen M.D."/>
            <person name="Andersen J.T."/>
            <person name="Joergensen P.L."/>
            <person name="Larsen T.S."/>
            <person name="Sorokin A."/>
            <person name="Bolotin A."/>
            <person name="Lapidus A."/>
            <person name="Galleron N."/>
            <person name="Ehrlich S.D."/>
            <person name="Berka R.M."/>
        </authorList>
    </citation>
    <scope>NUCLEOTIDE SEQUENCE [LARGE SCALE GENOMIC DNA]</scope>
    <source>
        <strain>ATCC 14580 / DSM 13 / JCM 2505 / CCUG 7422 / NBRC 12200 / NCIMB 9375 / NCTC 10341 / NRRL NRS-1264 / Gibson 46</strain>
    </source>
</reference>
<sequence>MKKGRVSQVLGPVVDVRFEDGHLPEIYNAIKVTHKAQNENEVDIDLTLEVALHLGDDSVRTIAMASTDGVTRGMEAIDLGEPISVPVGNVTLGRVFNVLGENIDLDEPLPADAAKDPIHREAPKFDQLSTEVEILETGIKVVDLLAPYIKGGKIGLFGGAGVGKTVLIQELINNIAQEHGGISVFAGVGERTREGNDLYYEMKDSGVIGKTAMVFGQMNEPPGARMRVALTGLTMAEHFRDKEGQDVLFFIDNIFRFTQAGSEVSALLGRMPSAVGYQPTLATEMGQLQERITSTNVGSVTSIQAIYVPADDYTDPAPATTFAHLDATTNLERKLSEMGIYPAVDPLASTSRALSPEIVGEEHYEVARSVQQILQRYKELQDIIAMLGMDELSDEDKLVVSRARRVQFFLSQNFHVAEQFTGQKGSYVPVKETVKGFKEILEGKYDHLPEDAFRLVGRIEEVVEKAKEMGVEV</sequence>
<evidence type="ECO:0000255" key="1">
    <source>
        <dbReference type="HAMAP-Rule" id="MF_01347"/>
    </source>
</evidence>
<comment type="function">
    <text evidence="1">Produces ATP from ADP in the presence of a proton gradient across the membrane. The catalytic sites are hosted primarily by the beta subunits.</text>
</comment>
<comment type="catalytic activity">
    <reaction evidence="1">
        <text>ATP + H2O + 4 H(+)(in) = ADP + phosphate + 5 H(+)(out)</text>
        <dbReference type="Rhea" id="RHEA:57720"/>
        <dbReference type="ChEBI" id="CHEBI:15377"/>
        <dbReference type="ChEBI" id="CHEBI:15378"/>
        <dbReference type="ChEBI" id="CHEBI:30616"/>
        <dbReference type="ChEBI" id="CHEBI:43474"/>
        <dbReference type="ChEBI" id="CHEBI:456216"/>
        <dbReference type="EC" id="7.1.2.2"/>
    </reaction>
</comment>
<comment type="subunit">
    <text evidence="1">F-type ATPases have 2 components, CF(1) - the catalytic core - and CF(0) - the membrane proton channel. CF(1) has five subunits: alpha(3), beta(3), gamma(1), delta(1), epsilon(1). CF(0) has three main subunits: a(1), b(2) and c(9-12). The alpha and beta chains form an alternating ring which encloses part of the gamma chain. CF(1) is attached to CF(0) by a central stalk formed by the gamma and epsilon chains, while a peripheral stalk is formed by the delta and b chains.</text>
</comment>
<comment type="subcellular location">
    <subcellularLocation>
        <location evidence="1">Cell membrane</location>
        <topology evidence="1">Peripheral membrane protein</topology>
    </subcellularLocation>
</comment>
<comment type="similarity">
    <text evidence="1">Belongs to the ATPase alpha/beta chains family.</text>
</comment>
<protein>
    <recommendedName>
        <fullName evidence="1">ATP synthase subunit beta</fullName>
        <ecNumber evidence="1">7.1.2.2</ecNumber>
    </recommendedName>
    <alternativeName>
        <fullName evidence="1">ATP synthase F1 sector subunit beta</fullName>
    </alternativeName>
    <alternativeName>
        <fullName evidence="1">F-ATPase subunit beta</fullName>
    </alternativeName>
</protein>
<name>ATPB_BACLD</name>
<accession>Q65DX4</accession>
<accession>Q62PE5</accession>